<reference key="1">
    <citation type="journal article" date="2008" name="J. Bacteriol.">
        <title>Genome sequence of Lactobacillus helveticus: an organism distinguished by selective gene loss and IS element expansion.</title>
        <authorList>
            <person name="Callanan M."/>
            <person name="Kaleta P."/>
            <person name="O'Callaghan J."/>
            <person name="O'Sullivan O."/>
            <person name="Jordan K."/>
            <person name="McAuliffe O."/>
            <person name="Sangrador-Vegas A."/>
            <person name="Slattery L."/>
            <person name="Fitzgerald G.F."/>
            <person name="Beresford T."/>
            <person name="Ross R.P."/>
        </authorList>
    </citation>
    <scope>NUCLEOTIDE SEQUENCE [LARGE SCALE GENOMIC DNA]</scope>
    <source>
        <strain>DPC 4571</strain>
    </source>
</reference>
<dbReference type="EMBL" id="CP000517">
    <property type="protein sequence ID" value="ABX26637.1"/>
    <property type="molecule type" value="Genomic_DNA"/>
</dbReference>
<dbReference type="RefSeq" id="WP_012211441.1">
    <property type="nucleotide sequence ID" value="NC_010080.1"/>
</dbReference>
<dbReference type="SMR" id="A8YTI1"/>
<dbReference type="KEGG" id="lhe:lhv_0429"/>
<dbReference type="eggNOG" id="COG0632">
    <property type="taxonomic scope" value="Bacteria"/>
</dbReference>
<dbReference type="HOGENOM" id="CLU_087936_1_0_9"/>
<dbReference type="Proteomes" id="UP000000790">
    <property type="component" value="Chromosome"/>
</dbReference>
<dbReference type="GO" id="GO:0005737">
    <property type="term" value="C:cytoplasm"/>
    <property type="evidence" value="ECO:0007669"/>
    <property type="project" value="UniProtKB-SubCell"/>
</dbReference>
<dbReference type="GO" id="GO:0009379">
    <property type="term" value="C:Holliday junction helicase complex"/>
    <property type="evidence" value="ECO:0007669"/>
    <property type="project" value="InterPro"/>
</dbReference>
<dbReference type="GO" id="GO:0048476">
    <property type="term" value="C:Holliday junction resolvase complex"/>
    <property type="evidence" value="ECO:0007669"/>
    <property type="project" value="UniProtKB-UniRule"/>
</dbReference>
<dbReference type="GO" id="GO:0005524">
    <property type="term" value="F:ATP binding"/>
    <property type="evidence" value="ECO:0007669"/>
    <property type="project" value="InterPro"/>
</dbReference>
<dbReference type="GO" id="GO:0000400">
    <property type="term" value="F:four-way junction DNA binding"/>
    <property type="evidence" value="ECO:0007669"/>
    <property type="project" value="UniProtKB-UniRule"/>
</dbReference>
<dbReference type="GO" id="GO:0009378">
    <property type="term" value="F:four-way junction helicase activity"/>
    <property type="evidence" value="ECO:0007669"/>
    <property type="project" value="InterPro"/>
</dbReference>
<dbReference type="GO" id="GO:0006310">
    <property type="term" value="P:DNA recombination"/>
    <property type="evidence" value="ECO:0007669"/>
    <property type="project" value="UniProtKB-UniRule"/>
</dbReference>
<dbReference type="GO" id="GO:0006281">
    <property type="term" value="P:DNA repair"/>
    <property type="evidence" value="ECO:0007669"/>
    <property type="project" value="UniProtKB-UniRule"/>
</dbReference>
<dbReference type="CDD" id="cd14332">
    <property type="entry name" value="UBA_RuvA_C"/>
    <property type="match status" value="1"/>
</dbReference>
<dbReference type="Gene3D" id="1.10.150.20">
    <property type="entry name" value="5' to 3' exonuclease, C-terminal subdomain"/>
    <property type="match status" value="1"/>
</dbReference>
<dbReference type="Gene3D" id="1.10.8.10">
    <property type="entry name" value="DNA helicase RuvA subunit, C-terminal domain"/>
    <property type="match status" value="1"/>
</dbReference>
<dbReference type="Gene3D" id="2.40.50.140">
    <property type="entry name" value="Nucleic acid-binding proteins"/>
    <property type="match status" value="1"/>
</dbReference>
<dbReference type="HAMAP" id="MF_00031">
    <property type="entry name" value="DNA_HJ_migration_RuvA"/>
    <property type="match status" value="1"/>
</dbReference>
<dbReference type="InterPro" id="IPR013849">
    <property type="entry name" value="DNA_helicase_Holl-junc_RuvA_I"/>
</dbReference>
<dbReference type="InterPro" id="IPR003583">
    <property type="entry name" value="Hlx-hairpin-Hlx_DNA-bd_motif"/>
</dbReference>
<dbReference type="InterPro" id="IPR012340">
    <property type="entry name" value="NA-bd_OB-fold"/>
</dbReference>
<dbReference type="InterPro" id="IPR000085">
    <property type="entry name" value="RuvA"/>
</dbReference>
<dbReference type="InterPro" id="IPR010994">
    <property type="entry name" value="RuvA_2-like"/>
</dbReference>
<dbReference type="InterPro" id="IPR011114">
    <property type="entry name" value="RuvA_C"/>
</dbReference>
<dbReference type="InterPro" id="IPR036267">
    <property type="entry name" value="RuvA_C_sf"/>
</dbReference>
<dbReference type="NCBIfam" id="TIGR00084">
    <property type="entry name" value="ruvA"/>
    <property type="match status" value="1"/>
</dbReference>
<dbReference type="Pfam" id="PF14520">
    <property type="entry name" value="HHH_5"/>
    <property type="match status" value="1"/>
</dbReference>
<dbReference type="Pfam" id="PF07499">
    <property type="entry name" value="RuvA_C"/>
    <property type="match status" value="1"/>
</dbReference>
<dbReference type="Pfam" id="PF01330">
    <property type="entry name" value="RuvA_N"/>
    <property type="match status" value="1"/>
</dbReference>
<dbReference type="SMART" id="SM00278">
    <property type="entry name" value="HhH1"/>
    <property type="match status" value="2"/>
</dbReference>
<dbReference type="SUPFAM" id="SSF46929">
    <property type="entry name" value="DNA helicase RuvA subunit, C-terminal domain"/>
    <property type="match status" value="1"/>
</dbReference>
<dbReference type="SUPFAM" id="SSF50249">
    <property type="entry name" value="Nucleic acid-binding proteins"/>
    <property type="match status" value="1"/>
</dbReference>
<dbReference type="SUPFAM" id="SSF47781">
    <property type="entry name" value="RuvA domain 2-like"/>
    <property type="match status" value="1"/>
</dbReference>
<organism>
    <name type="scientific">Lactobacillus helveticus (strain DPC 4571)</name>
    <dbReference type="NCBI Taxonomy" id="405566"/>
    <lineage>
        <taxon>Bacteria</taxon>
        <taxon>Bacillati</taxon>
        <taxon>Bacillota</taxon>
        <taxon>Bacilli</taxon>
        <taxon>Lactobacillales</taxon>
        <taxon>Lactobacillaceae</taxon>
        <taxon>Lactobacillus</taxon>
    </lineage>
</organism>
<protein>
    <recommendedName>
        <fullName evidence="1">Holliday junction branch migration complex subunit RuvA</fullName>
    </recommendedName>
</protein>
<feature type="chain" id="PRO_1000071018" description="Holliday junction branch migration complex subunit RuvA">
    <location>
        <begin position="1"/>
        <end position="196"/>
    </location>
</feature>
<feature type="region of interest" description="Domain I" evidence="1">
    <location>
        <begin position="1"/>
        <end position="61"/>
    </location>
</feature>
<feature type="region of interest" description="Domain II" evidence="1">
    <location>
        <begin position="62"/>
        <end position="140"/>
    </location>
</feature>
<feature type="region of interest" description="Flexible linker" evidence="1">
    <location>
        <begin position="141"/>
        <end position="149"/>
    </location>
</feature>
<feature type="region of interest" description="Domain III" evidence="1">
    <location>
        <begin position="149"/>
        <end position="196"/>
    </location>
</feature>
<accession>A8YTI1</accession>
<keyword id="KW-0963">Cytoplasm</keyword>
<keyword id="KW-0227">DNA damage</keyword>
<keyword id="KW-0233">DNA recombination</keyword>
<keyword id="KW-0234">DNA repair</keyword>
<keyword id="KW-0238">DNA-binding</keyword>
<sequence>MYEYFEGIVTVITPSYIVVDVNGVGYKVYSPTPFAYQKGDKAKIFIEQVVRDTGITLYGFQSEDDKGLFLKLLSVSGIGPKSALAIMAAEDANSLAEAIEQGEVKYLTRFPGVGKKTASQIVLDLKGKLRDYVARLDRQDEEQGNISPALNDALLALIALGYTQKEVDRITTKLEEVNADTADQYIKKGLALLLKK</sequence>
<comment type="function">
    <text evidence="1">The RuvA-RuvB-RuvC complex processes Holliday junction (HJ) DNA during genetic recombination and DNA repair, while the RuvA-RuvB complex plays an important role in the rescue of blocked DNA replication forks via replication fork reversal (RFR). RuvA specifically binds to HJ cruciform DNA, conferring on it an open structure. The RuvB hexamer acts as an ATP-dependent pump, pulling dsDNA into and through the RuvAB complex. HJ branch migration allows RuvC to scan DNA until it finds its consensus sequence, where it cleaves and resolves the cruciform DNA.</text>
</comment>
<comment type="subunit">
    <text evidence="1">Homotetramer. Forms an RuvA(8)-RuvB(12)-Holliday junction (HJ) complex. HJ DNA is sandwiched between 2 RuvA tetramers; dsDNA enters through RuvA and exits via RuvB. An RuvB hexamer assembles on each DNA strand where it exits the tetramer. Each RuvB hexamer is contacted by two RuvA subunits (via domain III) on 2 adjacent RuvB subunits; this complex drives branch migration. In the full resolvosome a probable DNA-RuvA(4)-RuvB(12)-RuvC(2) complex forms which resolves the HJ.</text>
</comment>
<comment type="subcellular location">
    <subcellularLocation>
        <location evidence="1">Cytoplasm</location>
    </subcellularLocation>
</comment>
<comment type="domain">
    <text evidence="1">Has three domains with a flexible linker between the domains II and III and assumes an 'L' shape. Domain III is highly mobile and contacts RuvB.</text>
</comment>
<comment type="similarity">
    <text evidence="1">Belongs to the RuvA family.</text>
</comment>
<proteinExistence type="inferred from homology"/>
<name>RUVA_LACH4</name>
<gene>
    <name evidence="1" type="primary">ruvA</name>
    <name type="ordered locus">lhv_0429</name>
</gene>
<evidence type="ECO:0000255" key="1">
    <source>
        <dbReference type="HAMAP-Rule" id="MF_00031"/>
    </source>
</evidence>